<protein>
    <recommendedName>
        <fullName evidence="1">Dihydroorotase</fullName>
        <shortName evidence="1">DHOase</shortName>
        <ecNumber evidence="1">3.5.2.3</ecNumber>
    </recommendedName>
</protein>
<keyword id="KW-0378">Hydrolase</keyword>
<keyword id="KW-0479">Metal-binding</keyword>
<keyword id="KW-0665">Pyrimidine biosynthesis</keyword>
<keyword id="KW-1185">Reference proteome</keyword>
<keyword id="KW-0862">Zinc</keyword>
<feature type="chain" id="PRO_0000325593" description="Dihydroorotase">
    <location>
        <begin position="1"/>
        <end position="447"/>
    </location>
</feature>
<feature type="active site" evidence="1">
    <location>
        <position position="325"/>
    </location>
</feature>
<feature type="binding site" evidence="1">
    <location>
        <position position="81"/>
    </location>
    <ligand>
        <name>Zn(2+)</name>
        <dbReference type="ChEBI" id="CHEBI:29105"/>
        <label>1</label>
    </ligand>
</feature>
<feature type="binding site" evidence="1">
    <location>
        <begin position="83"/>
        <end position="85"/>
    </location>
    <ligand>
        <name>substrate</name>
    </ligand>
</feature>
<feature type="binding site" evidence="1">
    <location>
        <position position="83"/>
    </location>
    <ligand>
        <name>Zn(2+)</name>
        <dbReference type="ChEBI" id="CHEBI:29105"/>
        <label>1</label>
    </ligand>
</feature>
<feature type="binding site" evidence="1">
    <location>
        <position position="115"/>
    </location>
    <ligand>
        <name>substrate</name>
    </ligand>
</feature>
<feature type="binding site" evidence="1">
    <location>
        <position position="171"/>
    </location>
    <ligand>
        <name>Zn(2+)</name>
        <dbReference type="ChEBI" id="CHEBI:29105"/>
        <label>1</label>
    </ligand>
</feature>
<feature type="binding site" evidence="1">
    <location>
        <position position="171"/>
    </location>
    <ligand>
        <name>Zn(2+)</name>
        <dbReference type="ChEBI" id="CHEBI:29105"/>
        <label>2</label>
    </ligand>
</feature>
<feature type="binding site" evidence="1">
    <location>
        <position position="198"/>
    </location>
    <ligand>
        <name>Zn(2+)</name>
        <dbReference type="ChEBI" id="CHEBI:29105"/>
        <label>2</label>
    </ligand>
</feature>
<feature type="binding site" evidence="1">
    <location>
        <position position="252"/>
    </location>
    <ligand>
        <name>Zn(2+)</name>
        <dbReference type="ChEBI" id="CHEBI:29105"/>
        <label>2</label>
    </ligand>
</feature>
<feature type="binding site" evidence="1">
    <location>
        <position position="298"/>
    </location>
    <ligand>
        <name>substrate</name>
    </ligand>
</feature>
<feature type="binding site" evidence="1">
    <location>
        <position position="325"/>
    </location>
    <ligand>
        <name>Zn(2+)</name>
        <dbReference type="ChEBI" id="CHEBI:29105"/>
        <label>1</label>
    </ligand>
</feature>
<feature type="binding site" evidence="1">
    <location>
        <position position="329"/>
    </location>
    <ligand>
        <name>substrate</name>
    </ligand>
</feature>
<feature type="binding site" evidence="1">
    <location>
        <begin position="343"/>
        <end position="344"/>
    </location>
    <ligand>
        <name>substrate</name>
    </ligand>
</feature>
<evidence type="ECO:0000255" key="1">
    <source>
        <dbReference type="HAMAP-Rule" id="MF_00220"/>
    </source>
</evidence>
<gene>
    <name evidence="1" type="primary">pyrC</name>
    <name type="ordered locus">ECH_0373</name>
</gene>
<name>PYRC_EHRCR</name>
<organism>
    <name type="scientific">Ehrlichia chaffeensis (strain ATCC CRL-10679 / Arkansas)</name>
    <dbReference type="NCBI Taxonomy" id="205920"/>
    <lineage>
        <taxon>Bacteria</taxon>
        <taxon>Pseudomonadati</taxon>
        <taxon>Pseudomonadota</taxon>
        <taxon>Alphaproteobacteria</taxon>
        <taxon>Rickettsiales</taxon>
        <taxon>Anaplasmataceae</taxon>
        <taxon>Ehrlichia</taxon>
    </lineage>
</organism>
<comment type="function">
    <text evidence="1">Catalyzes the reversible cyclization of carbamoyl aspartate to dihydroorotate.</text>
</comment>
<comment type="catalytic activity">
    <reaction evidence="1">
        <text>(S)-dihydroorotate + H2O = N-carbamoyl-L-aspartate + H(+)</text>
        <dbReference type="Rhea" id="RHEA:24296"/>
        <dbReference type="ChEBI" id="CHEBI:15377"/>
        <dbReference type="ChEBI" id="CHEBI:15378"/>
        <dbReference type="ChEBI" id="CHEBI:30864"/>
        <dbReference type="ChEBI" id="CHEBI:32814"/>
        <dbReference type="EC" id="3.5.2.3"/>
    </reaction>
</comment>
<comment type="cofactor">
    <cofactor evidence="1">
        <name>Zn(2+)</name>
        <dbReference type="ChEBI" id="CHEBI:29105"/>
    </cofactor>
    <text evidence="1">Binds 2 Zn(2+) ions per subunit.</text>
</comment>
<comment type="pathway">
    <text evidence="1">Pyrimidine metabolism; UMP biosynthesis via de novo pathway; (S)-dihydroorotate from bicarbonate: step 3/3.</text>
</comment>
<comment type="similarity">
    <text evidence="1">Belongs to the metallo-dependent hydrolases superfamily. DHOase family. Class I DHOase subfamily.</text>
</comment>
<dbReference type="EC" id="3.5.2.3" evidence="1"/>
<dbReference type="EMBL" id="CP000236">
    <property type="protein sequence ID" value="ABD45465.1"/>
    <property type="molecule type" value="Genomic_DNA"/>
</dbReference>
<dbReference type="RefSeq" id="WP_006009988.1">
    <property type="nucleotide sequence ID" value="NC_007799.1"/>
</dbReference>
<dbReference type="SMR" id="Q2GH90"/>
<dbReference type="STRING" id="205920.ECH_0373"/>
<dbReference type="KEGG" id="ech:ECH_0373"/>
<dbReference type="eggNOG" id="COG0044">
    <property type="taxonomic scope" value="Bacteria"/>
</dbReference>
<dbReference type="HOGENOM" id="CLU_015572_1_0_5"/>
<dbReference type="OrthoDB" id="9803027at2"/>
<dbReference type="UniPathway" id="UPA00070">
    <property type="reaction ID" value="UER00117"/>
</dbReference>
<dbReference type="Proteomes" id="UP000008320">
    <property type="component" value="Chromosome"/>
</dbReference>
<dbReference type="GO" id="GO:0005737">
    <property type="term" value="C:cytoplasm"/>
    <property type="evidence" value="ECO:0007669"/>
    <property type="project" value="TreeGrafter"/>
</dbReference>
<dbReference type="GO" id="GO:0004038">
    <property type="term" value="F:allantoinase activity"/>
    <property type="evidence" value="ECO:0007669"/>
    <property type="project" value="TreeGrafter"/>
</dbReference>
<dbReference type="GO" id="GO:0004151">
    <property type="term" value="F:dihydroorotase activity"/>
    <property type="evidence" value="ECO:0007669"/>
    <property type="project" value="UniProtKB-UniRule"/>
</dbReference>
<dbReference type="GO" id="GO:0008270">
    <property type="term" value="F:zinc ion binding"/>
    <property type="evidence" value="ECO:0007669"/>
    <property type="project" value="UniProtKB-UniRule"/>
</dbReference>
<dbReference type="GO" id="GO:0044205">
    <property type="term" value="P:'de novo' UMP biosynthetic process"/>
    <property type="evidence" value="ECO:0007669"/>
    <property type="project" value="UniProtKB-UniRule"/>
</dbReference>
<dbReference type="GO" id="GO:0006145">
    <property type="term" value="P:purine nucleobase catabolic process"/>
    <property type="evidence" value="ECO:0007669"/>
    <property type="project" value="TreeGrafter"/>
</dbReference>
<dbReference type="CDD" id="cd01317">
    <property type="entry name" value="DHOase_IIa"/>
    <property type="match status" value="1"/>
</dbReference>
<dbReference type="Gene3D" id="3.20.20.140">
    <property type="entry name" value="Metal-dependent hydrolases"/>
    <property type="match status" value="1"/>
</dbReference>
<dbReference type="Gene3D" id="2.30.40.10">
    <property type="entry name" value="Urease, subunit C, domain 1"/>
    <property type="match status" value="1"/>
</dbReference>
<dbReference type="HAMAP" id="MF_00220_B">
    <property type="entry name" value="PyrC_classI_B"/>
    <property type="match status" value="1"/>
</dbReference>
<dbReference type="InterPro" id="IPR006680">
    <property type="entry name" value="Amidohydro-rel"/>
</dbReference>
<dbReference type="InterPro" id="IPR004722">
    <property type="entry name" value="DHOase"/>
</dbReference>
<dbReference type="InterPro" id="IPR050138">
    <property type="entry name" value="DHOase/Allantoinase_Hydrolase"/>
</dbReference>
<dbReference type="InterPro" id="IPR002195">
    <property type="entry name" value="Dihydroorotase_CS"/>
</dbReference>
<dbReference type="InterPro" id="IPR011059">
    <property type="entry name" value="Metal-dep_hydrolase_composite"/>
</dbReference>
<dbReference type="InterPro" id="IPR032466">
    <property type="entry name" value="Metal_Hydrolase"/>
</dbReference>
<dbReference type="NCBIfam" id="TIGR00857">
    <property type="entry name" value="pyrC_multi"/>
    <property type="match status" value="1"/>
</dbReference>
<dbReference type="PANTHER" id="PTHR43668">
    <property type="entry name" value="ALLANTOINASE"/>
    <property type="match status" value="1"/>
</dbReference>
<dbReference type="PANTHER" id="PTHR43668:SF2">
    <property type="entry name" value="ALLANTOINASE"/>
    <property type="match status" value="1"/>
</dbReference>
<dbReference type="Pfam" id="PF01979">
    <property type="entry name" value="Amidohydro_1"/>
    <property type="match status" value="1"/>
</dbReference>
<dbReference type="SUPFAM" id="SSF51338">
    <property type="entry name" value="Composite domain of metallo-dependent hydrolases"/>
    <property type="match status" value="1"/>
</dbReference>
<dbReference type="SUPFAM" id="SSF51556">
    <property type="entry name" value="Metallo-dependent hydrolases"/>
    <property type="match status" value="1"/>
</dbReference>
<dbReference type="PROSITE" id="PS00482">
    <property type="entry name" value="DIHYDROOROTASE_1"/>
    <property type="match status" value="1"/>
</dbReference>
<dbReference type="PROSITE" id="PS00483">
    <property type="entry name" value="DIHYDROOROTASE_2"/>
    <property type="match status" value="1"/>
</dbReference>
<reference key="1">
    <citation type="journal article" date="2006" name="PLoS Genet.">
        <title>Comparative genomics of emerging human ehrlichiosis agents.</title>
        <authorList>
            <person name="Dunning Hotopp J.C."/>
            <person name="Lin M."/>
            <person name="Madupu R."/>
            <person name="Crabtree J."/>
            <person name="Angiuoli S.V."/>
            <person name="Eisen J.A."/>
            <person name="Seshadri R."/>
            <person name="Ren Q."/>
            <person name="Wu M."/>
            <person name="Utterback T.R."/>
            <person name="Smith S."/>
            <person name="Lewis M."/>
            <person name="Khouri H."/>
            <person name="Zhang C."/>
            <person name="Niu H."/>
            <person name="Lin Q."/>
            <person name="Ohashi N."/>
            <person name="Zhi N."/>
            <person name="Nelson W.C."/>
            <person name="Brinkac L.M."/>
            <person name="Dodson R.J."/>
            <person name="Rosovitz M.J."/>
            <person name="Sundaram J.P."/>
            <person name="Daugherty S.C."/>
            <person name="Davidsen T."/>
            <person name="Durkin A.S."/>
            <person name="Gwinn M.L."/>
            <person name="Haft D.H."/>
            <person name="Selengut J.D."/>
            <person name="Sullivan S.A."/>
            <person name="Zafar N."/>
            <person name="Zhou L."/>
            <person name="Benahmed F."/>
            <person name="Forberger H."/>
            <person name="Halpin R."/>
            <person name="Mulligan S."/>
            <person name="Robinson J."/>
            <person name="White O."/>
            <person name="Rikihisa Y."/>
            <person name="Tettelin H."/>
        </authorList>
    </citation>
    <scope>NUCLEOTIDE SEQUENCE [LARGE SCALE GENOMIC DNA]</scope>
    <source>
        <strain>ATCC CRL-10679 / Arkansas</strain>
    </source>
</reference>
<proteinExistence type="inferred from homology"/>
<sequence length="447" mass="49167">MYKQSWELLGNGQHADLTVAYINARIIDPESKLDIRGSLLTKGDKIIDFGPDLFANGIPSTIDEVIDCNNNILLPGLIDIHVHFREPGQEHKETINTGSKSAAAGGITTVVCQPNTIPTISSVITAKYIKMRALESAYVNIEFYASITKSDNSLSDMALLKEVGAVGFTDDGMPVMNALTMRQALSYSSMLDTVIAQHAEDLNISNNGCINEGIISYELGLKGIPDISESIIVNRDIALMKNIKNVHYHILHVSSQESLHIIKQAKSQGLKVTCEVTPHHFTLTERDIMTHGSLAKMNPPLRTENDRLSMIEGLKSGIIDCIATDHAPHDINAKELPLDTAAFGIVGLETMLPISLELYHNGTMPLIDLLATLTYKPADIIKVPRGRIKKDYVADLIILDLDHEWVVDISKFASKSKNSPFHNRKVKGKVLRTIVSGKTTYKAEIII</sequence>
<accession>Q2GH90</accession>